<accession>P0A424</accession>
<accession>P25898</accession>
<reference key="1">
    <citation type="journal article" date="1993" name="Gene">
        <title>Genes encoding eleven subunits of photosystem I from the thermophilic cyanobacterium Synechococcus sp.</title>
        <authorList>
            <person name="Muehlenhoff U."/>
            <person name="Haehnel W."/>
            <person name="Witt H.T."/>
            <person name="Herrmann R.G."/>
        </authorList>
    </citation>
    <scope>NUCLEOTIDE SEQUENCE [GENOMIC DNA]</scope>
</reference>
<reference key="2">
    <citation type="journal article" date="1997" name="Photosyn. Res.">
        <title>Molecular characterization and overexpression of the petF gene from Synechococcus elongatus: evidence for a second site of electrostatic interaction between ferredoxin and the PSI-D subunit.</title>
        <authorList>
            <person name="Floss B."/>
            <person name="Igloi G."/>
            <person name="Cassier-Chauvat C."/>
            <person name="Muehlenhoff U."/>
        </authorList>
    </citation>
    <scope>NUCLEOTIDE SEQUENCE [GENOMIC DNA]</scope>
</reference>
<reference key="3">
    <citation type="journal article" date="1993" name="Biochim. Biophys. Acta">
        <title>Small subunits of Photosystem I reaction center complexes from Synechococcus elongatus. I. Is the psaF gene product required for oxidation of cytochrome c-553?</title>
        <authorList>
            <person name="Hatanaka H."/>
            <person name="Sonoike K."/>
            <person name="Hirano M."/>
            <person name="Katoh S."/>
        </authorList>
    </citation>
    <scope>PROTEIN SEQUENCE OF 2-15</scope>
</reference>
<proteinExistence type="evidence at protein level"/>
<sequence length="76" mass="8389">MVQRGSKVKILRPESYWYNEVGTVASVDQTPGVKYPVIVRFDKVNYTGYSGSASGVNTNNFALHEVQEVAPPKKGK</sequence>
<dbReference type="EMBL" id="X63766">
    <property type="protein sequence ID" value="CAA45302.1"/>
    <property type="molecule type" value="Genomic_DNA"/>
</dbReference>
<dbReference type="EMBL" id="Y10290">
    <property type="protein sequence ID" value="CAA71332.1"/>
    <property type="molecule type" value="Genomic_DNA"/>
</dbReference>
<dbReference type="SMR" id="P0A424"/>
<dbReference type="GO" id="GO:0009538">
    <property type="term" value="C:photosystem I reaction center"/>
    <property type="evidence" value="ECO:0007669"/>
    <property type="project" value="InterPro"/>
</dbReference>
<dbReference type="GO" id="GO:0031676">
    <property type="term" value="C:plasma membrane-derived thylakoid membrane"/>
    <property type="evidence" value="ECO:0007669"/>
    <property type="project" value="UniProtKB-SubCell"/>
</dbReference>
<dbReference type="GO" id="GO:0015979">
    <property type="term" value="P:photosynthesis"/>
    <property type="evidence" value="ECO:0007669"/>
    <property type="project" value="UniProtKB-UniRule"/>
</dbReference>
<dbReference type="Gene3D" id="2.30.30.50">
    <property type="match status" value="1"/>
</dbReference>
<dbReference type="HAMAP" id="MF_00613">
    <property type="entry name" value="PSI_PsaE"/>
    <property type="match status" value="1"/>
</dbReference>
<dbReference type="InterPro" id="IPR008990">
    <property type="entry name" value="Elect_transpt_acc-like_dom_sf"/>
</dbReference>
<dbReference type="InterPro" id="IPR003375">
    <property type="entry name" value="PSI_PsaE"/>
</dbReference>
<dbReference type="NCBIfam" id="NF002745">
    <property type="entry name" value="PRK02749.1"/>
    <property type="match status" value="1"/>
</dbReference>
<dbReference type="PANTHER" id="PTHR34549">
    <property type="entry name" value="PHOTOSYSTEM I REACTION CENTER SUBUNIT IV A, CHLOROPLASTIC-RELATED"/>
    <property type="match status" value="1"/>
</dbReference>
<dbReference type="PANTHER" id="PTHR34549:SF2">
    <property type="entry name" value="PHOTOSYSTEM I SUBUNIT IV"/>
    <property type="match status" value="1"/>
</dbReference>
<dbReference type="Pfam" id="PF02427">
    <property type="entry name" value="PSI_PsaE"/>
    <property type="match status" value="1"/>
</dbReference>
<dbReference type="SUPFAM" id="SSF50090">
    <property type="entry name" value="Electron transport accessory proteins"/>
    <property type="match status" value="1"/>
</dbReference>
<comment type="function">
    <text>Stabilizes the interaction between PsaC and the PSI core, assists the docking of the ferredoxin to PSI and interacts with ferredoxin-NADP oxidoreductase.</text>
</comment>
<comment type="subcellular location">
    <subcellularLocation>
        <location>Cellular thylakoid membrane</location>
        <topology>Peripheral membrane protein</topology>
    </subcellularLocation>
</comment>
<comment type="similarity">
    <text evidence="2">Belongs to the PsaE family.</text>
</comment>
<gene>
    <name type="primary">psaE</name>
</gene>
<organism>
    <name type="scientific">Synechococcus elongatus</name>
    <dbReference type="NCBI Taxonomy" id="32046"/>
    <lineage>
        <taxon>Bacteria</taxon>
        <taxon>Bacillati</taxon>
        <taxon>Cyanobacteriota</taxon>
        <taxon>Cyanophyceae</taxon>
        <taxon>Synechococcales</taxon>
        <taxon>Synechococcaceae</taxon>
        <taxon>Synechococcus</taxon>
    </lineage>
</organism>
<protein>
    <recommendedName>
        <fullName>Photosystem I reaction center subunit IV</fullName>
    </recommendedName>
    <alternativeName>
        <fullName>Photosystem I 8.1 kDa protein</fullName>
    </alternativeName>
    <alternativeName>
        <fullName>p30 protein</fullName>
    </alternativeName>
</protein>
<feature type="initiator methionine" description="Removed" evidence="1">
    <location>
        <position position="1"/>
    </location>
</feature>
<feature type="chain" id="PRO_0000204409" description="Photosystem I reaction center subunit IV">
    <location>
        <begin position="2"/>
        <end position="76"/>
    </location>
</feature>
<name>PSAE_SYNEL</name>
<evidence type="ECO:0000269" key="1">
    <source>
    </source>
</evidence>
<evidence type="ECO:0000305" key="2"/>
<keyword id="KW-0903">Direct protein sequencing</keyword>
<keyword id="KW-0472">Membrane</keyword>
<keyword id="KW-0602">Photosynthesis</keyword>
<keyword id="KW-0603">Photosystem I</keyword>
<keyword id="KW-0793">Thylakoid</keyword>